<gene>
    <name evidence="1" type="primary">nuoB1</name>
    <name type="ordered locus">Acid345_2252</name>
</gene>
<name>NUOB1_KORVE</name>
<protein>
    <recommendedName>
        <fullName evidence="1">NADH-quinone oxidoreductase subunit B 1</fullName>
        <ecNumber evidence="1">7.1.1.-</ecNumber>
    </recommendedName>
    <alternativeName>
        <fullName evidence="1">NADH dehydrogenase I subunit B 1</fullName>
    </alternativeName>
    <alternativeName>
        <fullName evidence="1">NDH-1 subunit B 1</fullName>
    </alternativeName>
</protein>
<sequence>MSNYAPADPRASSNRYRYNGTCMTNPSERFDNLVGSDQSFEQLRRATFGEQPEEGIVLTTLDNAVNWIRKNSIWPMTFGLACCAIEMMSMGASRFDIARFGAEVFRPSPRQSDLMIIAGRVSQKMAPVIRHLYLQMPEPKWVISMGACATSGGVFNNYALVQGVNQYIPVDIYVPGCPPRPEQLIYAITLLQEKIQAERGSFRRALNLEPVTP</sequence>
<evidence type="ECO:0000255" key="1">
    <source>
        <dbReference type="HAMAP-Rule" id="MF_01356"/>
    </source>
</evidence>
<feature type="chain" id="PRO_0000376101" description="NADH-quinone oxidoreductase subunit B 1">
    <location>
        <begin position="1"/>
        <end position="213"/>
    </location>
</feature>
<feature type="binding site" evidence="1">
    <location>
        <position position="82"/>
    </location>
    <ligand>
        <name>[4Fe-4S] cluster</name>
        <dbReference type="ChEBI" id="CHEBI:49883"/>
    </ligand>
</feature>
<feature type="binding site" evidence="1">
    <location>
        <position position="83"/>
    </location>
    <ligand>
        <name>[4Fe-4S] cluster</name>
        <dbReference type="ChEBI" id="CHEBI:49883"/>
    </ligand>
</feature>
<feature type="binding site" evidence="1">
    <location>
        <position position="148"/>
    </location>
    <ligand>
        <name>[4Fe-4S] cluster</name>
        <dbReference type="ChEBI" id="CHEBI:49883"/>
    </ligand>
</feature>
<feature type="binding site" evidence="1">
    <location>
        <position position="177"/>
    </location>
    <ligand>
        <name>[4Fe-4S] cluster</name>
        <dbReference type="ChEBI" id="CHEBI:49883"/>
    </ligand>
</feature>
<organism>
    <name type="scientific">Koribacter versatilis (strain Ellin345)</name>
    <dbReference type="NCBI Taxonomy" id="204669"/>
    <lineage>
        <taxon>Bacteria</taxon>
        <taxon>Pseudomonadati</taxon>
        <taxon>Acidobacteriota</taxon>
        <taxon>Terriglobia</taxon>
        <taxon>Terriglobales</taxon>
        <taxon>Candidatus Korobacteraceae</taxon>
        <taxon>Candidatus Korobacter</taxon>
    </lineage>
</organism>
<keyword id="KW-0004">4Fe-4S</keyword>
<keyword id="KW-0997">Cell inner membrane</keyword>
<keyword id="KW-1003">Cell membrane</keyword>
<keyword id="KW-0408">Iron</keyword>
<keyword id="KW-0411">Iron-sulfur</keyword>
<keyword id="KW-0472">Membrane</keyword>
<keyword id="KW-0479">Metal-binding</keyword>
<keyword id="KW-0520">NAD</keyword>
<keyword id="KW-0874">Quinone</keyword>
<keyword id="KW-1185">Reference proteome</keyword>
<keyword id="KW-1278">Translocase</keyword>
<keyword id="KW-0813">Transport</keyword>
<keyword id="KW-0830">Ubiquinone</keyword>
<proteinExistence type="inferred from homology"/>
<accession>Q1IPE7</accession>
<reference key="1">
    <citation type="journal article" date="2009" name="Appl. Environ. Microbiol.">
        <title>Three genomes from the phylum Acidobacteria provide insight into the lifestyles of these microorganisms in soils.</title>
        <authorList>
            <person name="Ward N.L."/>
            <person name="Challacombe J.F."/>
            <person name="Janssen P.H."/>
            <person name="Henrissat B."/>
            <person name="Coutinho P.M."/>
            <person name="Wu M."/>
            <person name="Xie G."/>
            <person name="Haft D.H."/>
            <person name="Sait M."/>
            <person name="Badger J."/>
            <person name="Barabote R.D."/>
            <person name="Bradley B."/>
            <person name="Brettin T.S."/>
            <person name="Brinkac L.M."/>
            <person name="Bruce D."/>
            <person name="Creasy T."/>
            <person name="Daugherty S.C."/>
            <person name="Davidsen T.M."/>
            <person name="DeBoy R.T."/>
            <person name="Detter J.C."/>
            <person name="Dodson R.J."/>
            <person name="Durkin A.S."/>
            <person name="Ganapathy A."/>
            <person name="Gwinn-Giglio M."/>
            <person name="Han C.S."/>
            <person name="Khouri H."/>
            <person name="Kiss H."/>
            <person name="Kothari S.P."/>
            <person name="Madupu R."/>
            <person name="Nelson K.E."/>
            <person name="Nelson W.C."/>
            <person name="Paulsen I."/>
            <person name="Penn K."/>
            <person name="Ren Q."/>
            <person name="Rosovitz M.J."/>
            <person name="Selengut J.D."/>
            <person name="Shrivastava S."/>
            <person name="Sullivan S.A."/>
            <person name="Tapia R."/>
            <person name="Thompson L.S."/>
            <person name="Watkins K.L."/>
            <person name="Yang Q."/>
            <person name="Yu C."/>
            <person name="Zafar N."/>
            <person name="Zhou L."/>
            <person name="Kuske C.R."/>
        </authorList>
    </citation>
    <scope>NUCLEOTIDE SEQUENCE [LARGE SCALE GENOMIC DNA]</scope>
    <source>
        <strain>Ellin345</strain>
    </source>
</reference>
<dbReference type="EC" id="7.1.1.-" evidence="1"/>
<dbReference type="EMBL" id="CP000360">
    <property type="protein sequence ID" value="ABF41253.1"/>
    <property type="molecule type" value="Genomic_DNA"/>
</dbReference>
<dbReference type="RefSeq" id="WP_011523054.1">
    <property type="nucleotide sequence ID" value="NC_008009.1"/>
</dbReference>
<dbReference type="SMR" id="Q1IPE7"/>
<dbReference type="STRING" id="204669.Acid345_2252"/>
<dbReference type="EnsemblBacteria" id="ABF41253">
    <property type="protein sequence ID" value="ABF41253"/>
    <property type="gene ID" value="Acid345_2252"/>
</dbReference>
<dbReference type="KEGG" id="aba:Acid345_2252"/>
<dbReference type="eggNOG" id="COG0377">
    <property type="taxonomic scope" value="Bacteria"/>
</dbReference>
<dbReference type="HOGENOM" id="CLU_055737_7_3_0"/>
<dbReference type="OrthoDB" id="9786737at2"/>
<dbReference type="Proteomes" id="UP000002432">
    <property type="component" value="Chromosome"/>
</dbReference>
<dbReference type="GO" id="GO:0005886">
    <property type="term" value="C:plasma membrane"/>
    <property type="evidence" value="ECO:0007669"/>
    <property type="project" value="UniProtKB-SubCell"/>
</dbReference>
<dbReference type="GO" id="GO:0045271">
    <property type="term" value="C:respiratory chain complex I"/>
    <property type="evidence" value="ECO:0007669"/>
    <property type="project" value="TreeGrafter"/>
</dbReference>
<dbReference type="GO" id="GO:0051539">
    <property type="term" value="F:4 iron, 4 sulfur cluster binding"/>
    <property type="evidence" value="ECO:0007669"/>
    <property type="project" value="UniProtKB-KW"/>
</dbReference>
<dbReference type="GO" id="GO:0005506">
    <property type="term" value="F:iron ion binding"/>
    <property type="evidence" value="ECO:0007669"/>
    <property type="project" value="UniProtKB-UniRule"/>
</dbReference>
<dbReference type="GO" id="GO:0008137">
    <property type="term" value="F:NADH dehydrogenase (ubiquinone) activity"/>
    <property type="evidence" value="ECO:0007669"/>
    <property type="project" value="InterPro"/>
</dbReference>
<dbReference type="GO" id="GO:0050136">
    <property type="term" value="F:NADH:ubiquinone reductase (non-electrogenic) activity"/>
    <property type="evidence" value="ECO:0007669"/>
    <property type="project" value="UniProtKB-UniRule"/>
</dbReference>
<dbReference type="GO" id="GO:0048038">
    <property type="term" value="F:quinone binding"/>
    <property type="evidence" value="ECO:0007669"/>
    <property type="project" value="UniProtKB-KW"/>
</dbReference>
<dbReference type="GO" id="GO:0009060">
    <property type="term" value="P:aerobic respiration"/>
    <property type="evidence" value="ECO:0007669"/>
    <property type="project" value="TreeGrafter"/>
</dbReference>
<dbReference type="GO" id="GO:0015990">
    <property type="term" value="P:electron transport coupled proton transport"/>
    <property type="evidence" value="ECO:0007669"/>
    <property type="project" value="TreeGrafter"/>
</dbReference>
<dbReference type="FunFam" id="3.40.50.12280:FF:000004">
    <property type="entry name" value="NADH-quinone oxidoreductase subunit B"/>
    <property type="match status" value="1"/>
</dbReference>
<dbReference type="Gene3D" id="3.40.50.12280">
    <property type="match status" value="1"/>
</dbReference>
<dbReference type="HAMAP" id="MF_01356">
    <property type="entry name" value="NDH1_NuoB"/>
    <property type="match status" value="1"/>
</dbReference>
<dbReference type="InterPro" id="IPR006137">
    <property type="entry name" value="NADH_UbQ_OxRdtase-like_20kDa"/>
</dbReference>
<dbReference type="InterPro" id="IPR006138">
    <property type="entry name" value="NADH_UQ_OxRdtase_20Kd_su"/>
</dbReference>
<dbReference type="NCBIfam" id="TIGR01957">
    <property type="entry name" value="nuoB_fam"/>
    <property type="match status" value="1"/>
</dbReference>
<dbReference type="NCBIfam" id="NF005012">
    <property type="entry name" value="PRK06411.1"/>
    <property type="match status" value="1"/>
</dbReference>
<dbReference type="PANTHER" id="PTHR11995">
    <property type="entry name" value="NADH DEHYDROGENASE"/>
    <property type="match status" value="1"/>
</dbReference>
<dbReference type="PANTHER" id="PTHR11995:SF14">
    <property type="entry name" value="NADH DEHYDROGENASE [UBIQUINONE] IRON-SULFUR PROTEIN 7, MITOCHONDRIAL"/>
    <property type="match status" value="1"/>
</dbReference>
<dbReference type="Pfam" id="PF01058">
    <property type="entry name" value="Oxidored_q6"/>
    <property type="match status" value="1"/>
</dbReference>
<dbReference type="SUPFAM" id="SSF56770">
    <property type="entry name" value="HydA/Nqo6-like"/>
    <property type="match status" value="1"/>
</dbReference>
<comment type="function">
    <text evidence="1">NDH-1 shuttles electrons from NADH, via FMN and iron-sulfur (Fe-S) centers, to quinones in the respiratory chain. The immediate electron acceptor for the enzyme in this species is believed to be ubiquinone. Couples the redox reaction to proton translocation (for every two electrons transferred, four hydrogen ions are translocated across the cytoplasmic membrane), and thus conserves the redox energy in a proton gradient.</text>
</comment>
<comment type="catalytic activity">
    <reaction evidence="1">
        <text>a quinone + NADH + 5 H(+)(in) = a quinol + NAD(+) + 4 H(+)(out)</text>
        <dbReference type="Rhea" id="RHEA:57888"/>
        <dbReference type="ChEBI" id="CHEBI:15378"/>
        <dbReference type="ChEBI" id="CHEBI:24646"/>
        <dbReference type="ChEBI" id="CHEBI:57540"/>
        <dbReference type="ChEBI" id="CHEBI:57945"/>
        <dbReference type="ChEBI" id="CHEBI:132124"/>
    </reaction>
</comment>
<comment type="cofactor">
    <cofactor evidence="1">
        <name>[4Fe-4S] cluster</name>
        <dbReference type="ChEBI" id="CHEBI:49883"/>
    </cofactor>
    <text evidence="1">Binds 1 [4Fe-4S] cluster.</text>
</comment>
<comment type="subunit">
    <text evidence="1">NDH-1 is composed of 14 different subunits. Subunits NuoB, C, D, E, F, and G constitute the peripheral sector of the complex.</text>
</comment>
<comment type="subcellular location">
    <subcellularLocation>
        <location evidence="1">Cell inner membrane</location>
        <topology evidence="1">Peripheral membrane protein</topology>
        <orientation evidence="1">Cytoplasmic side</orientation>
    </subcellularLocation>
</comment>
<comment type="similarity">
    <text evidence="1">Belongs to the complex I 20 kDa subunit family.</text>
</comment>